<accession>Q01583</accession>
<accession>A8DY60</accession>
<accession>A8DY61</accession>
<accession>Q53YF9</accession>
<accession>Q7KQR7</accession>
<accession>Q8MKP0</accession>
<accession>Q9V327</accession>
<keyword id="KW-0025">Alternative splicing</keyword>
<keyword id="KW-0067">ATP-binding</keyword>
<keyword id="KW-0106">Calcium</keyword>
<keyword id="KW-0418">Kinase</keyword>
<keyword id="KW-0479">Metal-binding</keyword>
<keyword id="KW-0547">Nucleotide-binding</keyword>
<keyword id="KW-1185">Reference proteome</keyword>
<keyword id="KW-0677">Repeat</keyword>
<keyword id="KW-0808">Transferase</keyword>
<keyword id="KW-0862">Zinc</keyword>
<keyword id="KW-0863">Zinc-finger</keyword>
<organism>
    <name type="scientific">Drosophila melanogaster</name>
    <name type="common">Fruit fly</name>
    <dbReference type="NCBI Taxonomy" id="7227"/>
    <lineage>
        <taxon>Eukaryota</taxon>
        <taxon>Metazoa</taxon>
        <taxon>Ecdysozoa</taxon>
        <taxon>Arthropoda</taxon>
        <taxon>Hexapoda</taxon>
        <taxon>Insecta</taxon>
        <taxon>Pterygota</taxon>
        <taxon>Neoptera</taxon>
        <taxon>Endopterygota</taxon>
        <taxon>Diptera</taxon>
        <taxon>Brachycera</taxon>
        <taxon>Muscomorpha</taxon>
        <taxon>Ephydroidea</taxon>
        <taxon>Drosophilidae</taxon>
        <taxon>Drosophila</taxon>
        <taxon>Sophophora</taxon>
    </lineage>
</organism>
<gene>
    <name type="primary">Dgk</name>
    <name type="synonym">DGK1</name>
    <name type="ORF">CG34361</name>
</gene>
<reference key="1">
    <citation type="journal article" date="1992" name="Proc. Natl. Acad. Sci. U.S.A.">
        <title>Molecular cloning of a Drosophila diacylglycerol kinase gene that is expressed in the nervous system and muscle.</title>
        <authorList>
            <person name="Masai I."/>
            <person name="Hosoya T."/>
            <person name="Kojima S."/>
            <person name="Hotta Y."/>
        </authorList>
    </citation>
    <scope>NUCLEOTIDE SEQUENCE [MRNA] (ISOFORM G)</scope>
    <scope>FUNCTION</scope>
    <scope>TISSUE SPECIFICITY</scope>
    <scope>DEVELOPMENTAL STAGE</scope>
    <source>
        <strain>Oregon-R</strain>
    </source>
</reference>
<reference key="2">
    <citation type="journal article" date="1993" name="Biochem. J.">
        <title>A Drosophila gene encoding a protein with similarity to diacylglycerol kinase is expressed in specific neurons.</title>
        <authorList>
            <person name="Harden N."/>
            <person name="Yap S.F."/>
            <person name="Chiam M.-A."/>
            <person name="Lim L."/>
        </authorList>
    </citation>
    <scope>NUCLEOTIDE SEQUENCE [MRNA] (ISOFORM C)</scope>
    <scope>FUNCTION</scope>
    <scope>TISSUE SPECIFICITY</scope>
    <scope>DEVELOPMENTAL STAGE</scope>
    <source>
        <strain>Canton-S</strain>
        <tissue>Embryo</tissue>
    </source>
</reference>
<reference key="3">
    <citation type="journal article" date="2000" name="Science">
        <title>The genome sequence of Drosophila melanogaster.</title>
        <authorList>
            <person name="Adams M.D."/>
            <person name="Celniker S.E."/>
            <person name="Holt R.A."/>
            <person name="Evans C.A."/>
            <person name="Gocayne J.D."/>
            <person name="Amanatides P.G."/>
            <person name="Scherer S.E."/>
            <person name="Li P.W."/>
            <person name="Hoskins R.A."/>
            <person name="Galle R.F."/>
            <person name="George R.A."/>
            <person name="Lewis S.E."/>
            <person name="Richards S."/>
            <person name="Ashburner M."/>
            <person name="Henderson S.N."/>
            <person name="Sutton G.G."/>
            <person name="Wortman J.R."/>
            <person name="Yandell M.D."/>
            <person name="Zhang Q."/>
            <person name="Chen L.X."/>
            <person name="Brandon R.C."/>
            <person name="Rogers Y.-H.C."/>
            <person name="Blazej R.G."/>
            <person name="Champe M."/>
            <person name="Pfeiffer B.D."/>
            <person name="Wan K.H."/>
            <person name="Doyle C."/>
            <person name="Baxter E.G."/>
            <person name="Helt G."/>
            <person name="Nelson C.R."/>
            <person name="Miklos G.L.G."/>
            <person name="Abril J.F."/>
            <person name="Agbayani A."/>
            <person name="An H.-J."/>
            <person name="Andrews-Pfannkoch C."/>
            <person name="Baldwin D."/>
            <person name="Ballew R.M."/>
            <person name="Basu A."/>
            <person name="Baxendale J."/>
            <person name="Bayraktaroglu L."/>
            <person name="Beasley E.M."/>
            <person name="Beeson K.Y."/>
            <person name="Benos P.V."/>
            <person name="Berman B.P."/>
            <person name="Bhandari D."/>
            <person name="Bolshakov S."/>
            <person name="Borkova D."/>
            <person name="Botchan M.R."/>
            <person name="Bouck J."/>
            <person name="Brokstein P."/>
            <person name="Brottier P."/>
            <person name="Burtis K.C."/>
            <person name="Busam D.A."/>
            <person name="Butler H."/>
            <person name="Cadieu E."/>
            <person name="Center A."/>
            <person name="Chandra I."/>
            <person name="Cherry J.M."/>
            <person name="Cawley S."/>
            <person name="Dahlke C."/>
            <person name="Davenport L.B."/>
            <person name="Davies P."/>
            <person name="de Pablos B."/>
            <person name="Delcher A."/>
            <person name="Deng Z."/>
            <person name="Mays A.D."/>
            <person name="Dew I."/>
            <person name="Dietz S.M."/>
            <person name="Dodson K."/>
            <person name="Doup L.E."/>
            <person name="Downes M."/>
            <person name="Dugan-Rocha S."/>
            <person name="Dunkov B.C."/>
            <person name="Dunn P."/>
            <person name="Durbin K.J."/>
            <person name="Evangelista C.C."/>
            <person name="Ferraz C."/>
            <person name="Ferriera S."/>
            <person name="Fleischmann W."/>
            <person name="Fosler C."/>
            <person name="Gabrielian A.E."/>
            <person name="Garg N.S."/>
            <person name="Gelbart W.M."/>
            <person name="Glasser K."/>
            <person name="Glodek A."/>
            <person name="Gong F."/>
            <person name="Gorrell J.H."/>
            <person name="Gu Z."/>
            <person name="Guan P."/>
            <person name="Harris M."/>
            <person name="Harris N.L."/>
            <person name="Harvey D.A."/>
            <person name="Heiman T.J."/>
            <person name="Hernandez J.R."/>
            <person name="Houck J."/>
            <person name="Hostin D."/>
            <person name="Houston K.A."/>
            <person name="Howland T.J."/>
            <person name="Wei M.-H."/>
            <person name="Ibegwam C."/>
            <person name="Jalali M."/>
            <person name="Kalush F."/>
            <person name="Karpen G.H."/>
            <person name="Ke Z."/>
            <person name="Kennison J.A."/>
            <person name="Ketchum K.A."/>
            <person name="Kimmel B.E."/>
            <person name="Kodira C.D."/>
            <person name="Kraft C.L."/>
            <person name="Kravitz S."/>
            <person name="Kulp D."/>
            <person name="Lai Z."/>
            <person name="Lasko P."/>
            <person name="Lei Y."/>
            <person name="Levitsky A.A."/>
            <person name="Li J.H."/>
            <person name="Li Z."/>
            <person name="Liang Y."/>
            <person name="Lin X."/>
            <person name="Liu X."/>
            <person name="Mattei B."/>
            <person name="McIntosh T.C."/>
            <person name="McLeod M.P."/>
            <person name="McPherson D."/>
            <person name="Merkulov G."/>
            <person name="Milshina N.V."/>
            <person name="Mobarry C."/>
            <person name="Morris J."/>
            <person name="Moshrefi A."/>
            <person name="Mount S.M."/>
            <person name="Moy M."/>
            <person name="Murphy B."/>
            <person name="Murphy L."/>
            <person name="Muzny D.M."/>
            <person name="Nelson D.L."/>
            <person name="Nelson D.R."/>
            <person name="Nelson K.A."/>
            <person name="Nixon K."/>
            <person name="Nusskern D.R."/>
            <person name="Pacleb J.M."/>
            <person name="Palazzolo M."/>
            <person name="Pittman G.S."/>
            <person name="Pan S."/>
            <person name="Pollard J."/>
            <person name="Puri V."/>
            <person name="Reese M.G."/>
            <person name="Reinert K."/>
            <person name="Remington K."/>
            <person name="Saunders R.D.C."/>
            <person name="Scheeler F."/>
            <person name="Shen H."/>
            <person name="Shue B.C."/>
            <person name="Siden-Kiamos I."/>
            <person name="Simpson M."/>
            <person name="Skupski M.P."/>
            <person name="Smith T.J."/>
            <person name="Spier E."/>
            <person name="Spradling A.C."/>
            <person name="Stapleton M."/>
            <person name="Strong R."/>
            <person name="Sun E."/>
            <person name="Svirskas R."/>
            <person name="Tector C."/>
            <person name="Turner R."/>
            <person name="Venter E."/>
            <person name="Wang A.H."/>
            <person name="Wang X."/>
            <person name="Wang Z.-Y."/>
            <person name="Wassarman D.A."/>
            <person name="Weinstock G.M."/>
            <person name="Weissenbach J."/>
            <person name="Williams S.M."/>
            <person name="Woodage T."/>
            <person name="Worley K.C."/>
            <person name="Wu D."/>
            <person name="Yang S."/>
            <person name="Yao Q.A."/>
            <person name="Ye J."/>
            <person name="Yeh R.-F."/>
            <person name="Zaveri J.S."/>
            <person name="Zhan M."/>
            <person name="Zhang G."/>
            <person name="Zhao Q."/>
            <person name="Zheng L."/>
            <person name="Zheng X.H."/>
            <person name="Zhong F.N."/>
            <person name="Zhong W."/>
            <person name="Zhou X."/>
            <person name="Zhu S.C."/>
            <person name="Zhu X."/>
            <person name="Smith H.O."/>
            <person name="Gibbs R.A."/>
            <person name="Myers E.W."/>
            <person name="Rubin G.M."/>
            <person name="Venter J.C."/>
        </authorList>
    </citation>
    <scope>NUCLEOTIDE SEQUENCE [LARGE SCALE GENOMIC DNA]</scope>
    <source>
        <strain>Berkeley</strain>
    </source>
</reference>
<reference key="4">
    <citation type="journal article" date="2002" name="Genome Biol.">
        <title>Annotation of the Drosophila melanogaster euchromatic genome: a systematic review.</title>
        <authorList>
            <person name="Misra S."/>
            <person name="Crosby M.A."/>
            <person name="Mungall C.J."/>
            <person name="Matthews B.B."/>
            <person name="Campbell K.S."/>
            <person name="Hradecky P."/>
            <person name="Huang Y."/>
            <person name="Kaminker J.S."/>
            <person name="Millburn G.H."/>
            <person name="Prochnik S.E."/>
            <person name="Smith C.D."/>
            <person name="Tupy J.L."/>
            <person name="Whitfield E.J."/>
            <person name="Bayraktaroglu L."/>
            <person name="Berman B.P."/>
            <person name="Bettencourt B.R."/>
            <person name="Celniker S.E."/>
            <person name="de Grey A.D.N.J."/>
            <person name="Drysdale R.A."/>
            <person name="Harris N.L."/>
            <person name="Richter J."/>
            <person name="Russo S."/>
            <person name="Schroeder A.J."/>
            <person name="Shu S.Q."/>
            <person name="Stapleton M."/>
            <person name="Yamada C."/>
            <person name="Ashburner M."/>
            <person name="Gelbart W.M."/>
            <person name="Rubin G.M."/>
            <person name="Lewis S.E."/>
        </authorList>
    </citation>
    <scope>GENOME REANNOTATION</scope>
    <scope>ALTERNATIVE SPLICING</scope>
    <source>
        <strain>Berkeley</strain>
    </source>
</reference>
<reference key="5">
    <citation type="submission" date="2003-01" db="EMBL/GenBank/DDBJ databases">
        <authorList>
            <person name="Stapleton M."/>
            <person name="Brokstein P."/>
            <person name="Hong L."/>
            <person name="Agbayani A."/>
            <person name="Carlson J.W."/>
            <person name="Champe M."/>
            <person name="Chavez C."/>
            <person name="Dorsett V."/>
            <person name="Dresnek D."/>
            <person name="Farfan D."/>
            <person name="Frise E."/>
            <person name="George R.A."/>
            <person name="Gonzalez M."/>
            <person name="Guarin H."/>
            <person name="Kronmiller B."/>
            <person name="Li P.W."/>
            <person name="Liao G."/>
            <person name="Miranda A."/>
            <person name="Mungall C.J."/>
            <person name="Nunoo J."/>
            <person name="Pacleb J.M."/>
            <person name="Paragas V."/>
            <person name="Park S."/>
            <person name="Patel S."/>
            <person name="Phouanenavong S."/>
            <person name="Wan K.H."/>
            <person name="Yu C."/>
            <person name="Lewis S.E."/>
            <person name="Rubin G.M."/>
            <person name="Celniker S.E."/>
        </authorList>
    </citation>
    <scope>NUCLEOTIDE SEQUENCE [LARGE SCALE MRNA] (ISOFORM G)</scope>
    <source>
        <strain>Berkeley</strain>
        <tissue>Testis</tissue>
    </source>
</reference>
<evidence type="ECO:0000250" key="1"/>
<evidence type="ECO:0000255" key="2">
    <source>
        <dbReference type="PROSITE-ProRule" id="PRU00226"/>
    </source>
</evidence>
<evidence type="ECO:0000255" key="3">
    <source>
        <dbReference type="PROSITE-ProRule" id="PRU00448"/>
    </source>
</evidence>
<evidence type="ECO:0000255" key="4">
    <source>
        <dbReference type="PROSITE-ProRule" id="PRU00783"/>
    </source>
</evidence>
<evidence type="ECO:0000256" key="5">
    <source>
        <dbReference type="SAM" id="MobiDB-lite"/>
    </source>
</evidence>
<evidence type="ECO:0000269" key="6">
    <source>
    </source>
</evidence>
<evidence type="ECO:0000269" key="7">
    <source>
    </source>
</evidence>
<evidence type="ECO:0000303" key="8">
    <source>
    </source>
</evidence>
<evidence type="ECO:0000303" key="9">
    <source>
    </source>
</evidence>
<evidence type="ECO:0000303" key="10">
    <source ref="5"/>
</evidence>
<evidence type="ECO:0000305" key="11"/>
<sequence length="1211" mass="132960">MNIGIAAPKWDKLSPREFLQLQELASYSTRKLQDVLREFSSPSAASTPKCIPDGDIDFDGFRRFLDAFLDCEAPLDLAKHLFVSFLKPNVTQAQLHGRALNQMAAISSTAACAPVTSHTKGSIPNINSIAELMPQCSGGGGGIGGTGGVAGAEGHAQARSSFVDKIHGITDKLHHSLGGHLSHDPSKTGSVHPMLTVTPSPLASGPSMFQASNPARRSVDSSPSHSATNHSQMSRNSSKKSSNSVNCKIDADIKLLARKLSHFDPLTLKVPLKDVVCYLSLLEAGRPEDKLEFMFRLYDTDSNGVLDTAEMDAIVNQMMAVAEYLGWDVSELRPILQEMMVEIDYDADGTVSLDEWQRGGMTTIPLLVLLGVDSTTLKEDGIHVWRLKHFSKPAYCNLCLNMLVGLGKKGLCCVLCKYTVHERCVQHAPASCITTYVKSKKPKCGGDLLHHWVEGNCYGRCSKCRKRIKAYHGITGLTCRWCHMMLHNRCASSVKKECTLGEYSELIVPPTAICPAVLDRQRSVNQAHKKSQMHHHQATHFQITPPDELSCPLLVFVNPKSGGRQGDRILRKFQYMLNPRQVYDLSKGGPKEGLTLFKDLPRFRVICCGGDGTVGWVLEAMDSIELASQPAIGVIPLGTGNDLARCLRWGGGYEGENIPKLMDKFRRASTVMLDRWSIEVTNTPHSDDMRPKVTLHSNMQKVIELSQSVVVDKSLMERFEEIQRQSKQVATSMGTAASSTSIMMASKTETEMETMATMEFGSSTTTTNRTTTTKSISMSTFETQCLQQTLRTAMSSSSSNTSSGSPCNGNQDAETEVDSHAAAAADVREKSVPRRSGETEKQSLETLLLQHKQQMQQQQQQQQQGVTSLAVEEAATATPVGSNQSDNSSQRNKQNNILKQQITLSLDLSDHEDEPKDDGGGAGDGTKSNGNSIPATPATPITPTTPNAASSVLQQQQQQHLQFEQQQKPIKVQSDKDCTVPYNIINNYFSVGVDAAICVKFHLEREKNPHKFNSRMKNKLWYFEYATSETFAASCKNLHESIEIVCDGVALDLANGPHLQGVALLNIPYTHGGSNLWGEHLSQKRIRKSAGPFGKSKKLRAGDKEFSATSFNSVDLSVAIQDFGDRLIEVIGLENCLHMGQVRTGLRASGRRLAQCSEVIIKTKKTFPMQIDGEPWMQMPCTIKVTHKNQVPMLMAPRSEKGRGFFNLLCS</sequence>
<protein>
    <recommendedName>
        <fullName>Diacylglycerol kinase 1</fullName>
        <shortName>DAG kinase 1</shortName>
        <shortName>DGK 1</shortName>
        <shortName>Diglyceride kinase 1</shortName>
        <ecNumber>2.7.1.107</ecNumber>
    </recommendedName>
</protein>
<comment type="function">
    <text evidence="1 6 7">Upon cell stimulation converts the second messenger diacylglycerol into phosphatidate, initiating the resynthesis of phosphatidylinositols and attenuating protein kinase C activity (By similarity). May have a role in the development of the embryonic nervous system and the function of the adult nervous system and muscle; regulating signal transduction in neurons.</text>
</comment>
<comment type="catalytic activity">
    <reaction>
        <text>a 1,2-diacyl-sn-glycerol + ATP = a 1,2-diacyl-sn-glycero-3-phosphate + ADP + H(+)</text>
        <dbReference type="Rhea" id="RHEA:10272"/>
        <dbReference type="ChEBI" id="CHEBI:15378"/>
        <dbReference type="ChEBI" id="CHEBI:17815"/>
        <dbReference type="ChEBI" id="CHEBI:30616"/>
        <dbReference type="ChEBI" id="CHEBI:58608"/>
        <dbReference type="ChEBI" id="CHEBI:456216"/>
        <dbReference type="EC" id="2.7.1.107"/>
    </reaction>
</comment>
<comment type="alternative products">
    <event type="alternative splicing"/>
    <isoform>
        <id>Q01583-4</id>
        <name>E</name>
        <sequence type="displayed"/>
    </isoform>
    <isoform>
        <id>Q01583-3</id>
        <name>C</name>
        <sequence type="described" ref="VSP_017884"/>
    </isoform>
    <isoform>
        <id>Q01583-1</id>
        <name>F</name>
        <sequence type="described" ref="VSP_033247"/>
    </isoform>
    <isoform>
        <id>Q01583-2</id>
        <name>G</name>
        <sequence type="described" ref="VSP_017885 VSP_017886 VSP_017887"/>
    </isoform>
</comment>
<comment type="tissue specificity">
    <text evidence="6 7">In 10-11 hours embryos, expression is abundant in a limited number of cells in the procephalic region and in the ventral nerve cord. Predominantly expressed in the adult nervous system and muscle: including compound eyes, brain cortex, fibrillar muscle, and tubular muscle.</text>
</comment>
<comment type="developmental stage">
    <text evidence="6 7">Expressed in the embryonic, pupal and adult stages, with little expression during the larval stages.</text>
</comment>
<comment type="similarity">
    <text evidence="11">Belongs to the eukaryotic diacylglycerol kinase family.</text>
</comment>
<dbReference type="EC" id="2.7.1.107"/>
<dbReference type="EMBL" id="D11120">
    <property type="protein sequence ID" value="BAA01894.1"/>
    <property type="molecule type" value="mRNA"/>
</dbReference>
<dbReference type="EMBL" id="X67335">
    <property type="protein sequence ID" value="CAA47750.1"/>
    <property type="molecule type" value="mRNA"/>
</dbReference>
<dbReference type="EMBL" id="AE013599">
    <property type="protein sequence ID" value="AAF59180.1"/>
    <property type="molecule type" value="Genomic_DNA"/>
</dbReference>
<dbReference type="EMBL" id="AE013599">
    <property type="protein sequence ID" value="AAS64897.1"/>
    <property type="molecule type" value="Genomic_DNA"/>
</dbReference>
<dbReference type="EMBL" id="AE013599">
    <property type="protein sequence ID" value="ABV53719.1"/>
    <property type="molecule type" value="Genomic_DNA"/>
</dbReference>
<dbReference type="EMBL" id="AE013599">
    <property type="protein sequence ID" value="ABV53720.1"/>
    <property type="molecule type" value="Genomic_DNA"/>
</dbReference>
<dbReference type="EMBL" id="BT003323">
    <property type="protein sequence ID" value="AAO25083.1"/>
    <property type="molecule type" value="mRNA"/>
</dbReference>
<dbReference type="PIR" id="A46140">
    <property type="entry name" value="A46140"/>
</dbReference>
<dbReference type="PIR" id="B46140">
    <property type="entry name" value="B46140"/>
</dbReference>
<dbReference type="RefSeq" id="NP_001097219.1">
    <molecule id="Q01583-4"/>
    <property type="nucleotide sequence ID" value="NM_001103749.2"/>
</dbReference>
<dbReference type="RefSeq" id="NP_001097220.1">
    <molecule id="Q01583-1"/>
    <property type="nucleotide sequence ID" value="NM_001103750.3"/>
</dbReference>
<dbReference type="RefSeq" id="NP_523654.2">
    <molecule id="Q01583-2"/>
    <property type="nucleotide sequence ID" value="NM_078930.4"/>
</dbReference>
<dbReference type="RefSeq" id="NP_995775.2">
    <property type="nucleotide sequence ID" value="NM_206053.2"/>
</dbReference>
<dbReference type="FunCoup" id="Q01583">
    <property type="interactions" value="394"/>
</dbReference>
<dbReference type="IntAct" id="Q01583">
    <property type="interactions" value="1"/>
</dbReference>
<dbReference type="STRING" id="7227.FBpp0300813"/>
<dbReference type="BindingDB" id="Q01583"/>
<dbReference type="ChEMBL" id="CHEMBL1075068"/>
<dbReference type="GlyGen" id="Q01583">
    <property type="glycosylation" value="4 sites"/>
</dbReference>
<dbReference type="PaxDb" id="7227-FBpp0300813"/>
<dbReference type="DNASU" id="35738"/>
<dbReference type="EnsemblMetazoa" id="FBtr0112579">
    <molecule id="Q01583-2"/>
    <property type="protein sequence ID" value="FBpp0111491"/>
    <property type="gene ID" value="FBgn0085390"/>
</dbReference>
<dbReference type="EnsemblMetazoa" id="FBtr0112580">
    <molecule id="Q01583-4"/>
    <property type="protein sequence ID" value="FBpp0111492"/>
    <property type="gene ID" value="FBgn0085390"/>
</dbReference>
<dbReference type="EnsemblMetazoa" id="FBtr0112581">
    <molecule id="Q01583-1"/>
    <property type="protein sequence ID" value="FBpp0111493"/>
    <property type="gene ID" value="FBgn0085390"/>
</dbReference>
<dbReference type="GeneID" id="35738"/>
<dbReference type="KEGG" id="dme:Dmel_CG34361"/>
<dbReference type="AGR" id="FB:FBgn0085390"/>
<dbReference type="CTD" id="35738"/>
<dbReference type="FlyBase" id="FBgn0085390">
    <property type="gene designation" value="Dgk"/>
</dbReference>
<dbReference type="VEuPathDB" id="VectorBase:FBgn0085390"/>
<dbReference type="eggNOG" id="KOG0696">
    <property type="taxonomic scope" value="Eukaryota"/>
</dbReference>
<dbReference type="eggNOG" id="KOG1169">
    <property type="taxonomic scope" value="Eukaryota"/>
</dbReference>
<dbReference type="GeneTree" id="ENSGT00940000168305"/>
<dbReference type="InParanoid" id="Q01583"/>
<dbReference type="OrthoDB" id="242257at2759"/>
<dbReference type="PhylomeDB" id="Q01583"/>
<dbReference type="BRENDA" id="2.7.1.107">
    <property type="organism ID" value="1994"/>
</dbReference>
<dbReference type="Reactome" id="R-DME-114508">
    <property type="pathway name" value="Effects of PIP2 hydrolysis"/>
</dbReference>
<dbReference type="BioGRID-ORCS" id="35738">
    <property type="hits" value="0 hits in 3 CRISPR screens"/>
</dbReference>
<dbReference type="ChiTaRS" id="rdgA">
    <property type="organism name" value="fly"/>
</dbReference>
<dbReference type="GenomeRNAi" id="35738"/>
<dbReference type="PRO" id="PR:Q01583"/>
<dbReference type="Proteomes" id="UP000000803">
    <property type="component" value="Chromosome 2R"/>
</dbReference>
<dbReference type="Bgee" id="FBgn0085390">
    <property type="expression patterns" value="Expressed in adult Malpighian tubule principal cell of initial segment in Malpighian tubule and 209 other cell types or tissues"/>
</dbReference>
<dbReference type="ExpressionAtlas" id="Q01583">
    <property type="expression patterns" value="baseline and differential"/>
</dbReference>
<dbReference type="GO" id="GO:0005886">
    <property type="term" value="C:plasma membrane"/>
    <property type="evidence" value="ECO:0000318"/>
    <property type="project" value="GO_Central"/>
</dbReference>
<dbReference type="GO" id="GO:0005524">
    <property type="term" value="F:ATP binding"/>
    <property type="evidence" value="ECO:0007669"/>
    <property type="project" value="UniProtKB-KW"/>
</dbReference>
<dbReference type="GO" id="GO:0004143">
    <property type="term" value="F:ATP-dependent diacylglycerol kinase activity"/>
    <property type="evidence" value="ECO:0000314"/>
    <property type="project" value="FlyBase"/>
</dbReference>
<dbReference type="GO" id="GO:0005509">
    <property type="term" value="F:calcium ion binding"/>
    <property type="evidence" value="ECO:0007669"/>
    <property type="project" value="InterPro"/>
</dbReference>
<dbReference type="GO" id="GO:0008270">
    <property type="term" value="F:zinc ion binding"/>
    <property type="evidence" value="ECO:0007669"/>
    <property type="project" value="UniProtKB-KW"/>
</dbReference>
<dbReference type="GO" id="GO:0046339">
    <property type="term" value="P:diacylglycerol metabolic process"/>
    <property type="evidence" value="ECO:0000318"/>
    <property type="project" value="GO_Central"/>
</dbReference>
<dbReference type="GO" id="GO:0035556">
    <property type="term" value="P:intracellular signal transduction"/>
    <property type="evidence" value="ECO:0000318"/>
    <property type="project" value="GO_Central"/>
</dbReference>
<dbReference type="GO" id="GO:0006654">
    <property type="term" value="P:phosphatidic acid biosynthetic process"/>
    <property type="evidence" value="ECO:0000318"/>
    <property type="project" value="GO_Central"/>
</dbReference>
<dbReference type="GO" id="GO:0007200">
    <property type="term" value="P:phospholipase C-activating G protein-coupled receptor signaling pathway"/>
    <property type="evidence" value="ECO:0007669"/>
    <property type="project" value="InterPro"/>
</dbReference>
<dbReference type="CDD" id="cd20851">
    <property type="entry name" value="C1_DGK_typeI_like_rpt2"/>
    <property type="match status" value="1"/>
</dbReference>
<dbReference type="CDD" id="cd20845">
    <property type="entry name" value="C1_DGKbeta_rpt1"/>
    <property type="match status" value="1"/>
</dbReference>
<dbReference type="CDD" id="cd00051">
    <property type="entry name" value="EFh"/>
    <property type="match status" value="1"/>
</dbReference>
<dbReference type="FunFam" id="1.10.238.10:FF:000017">
    <property type="entry name" value="Diacylglycerol kinase"/>
    <property type="match status" value="1"/>
</dbReference>
<dbReference type="FunFam" id="1.10.238.110:FF:000007">
    <property type="entry name" value="Diacylglycerol kinase"/>
    <property type="match status" value="1"/>
</dbReference>
<dbReference type="FunFam" id="1.10.238.110:FF:000008">
    <property type="entry name" value="Diacylglycerol kinase"/>
    <property type="match status" value="1"/>
</dbReference>
<dbReference type="FunFam" id="3.30.60.20:FF:000013">
    <property type="entry name" value="Diacylglycerol kinase"/>
    <property type="match status" value="1"/>
</dbReference>
<dbReference type="FunFam" id="3.40.50.10330:FF:000003">
    <property type="entry name" value="Diacylglycerol kinase"/>
    <property type="match status" value="1"/>
</dbReference>
<dbReference type="Gene3D" id="2.60.200.40">
    <property type="match status" value="1"/>
</dbReference>
<dbReference type="Gene3D" id="3.30.60.20">
    <property type="match status" value="2"/>
</dbReference>
<dbReference type="Gene3D" id="1.10.238.110">
    <property type="entry name" value="Diacylglycerol kinase alpha"/>
    <property type="match status" value="2"/>
</dbReference>
<dbReference type="Gene3D" id="1.10.238.10">
    <property type="entry name" value="EF-hand"/>
    <property type="match status" value="1"/>
</dbReference>
<dbReference type="Gene3D" id="3.40.50.10330">
    <property type="entry name" value="Probable inorganic polyphosphate/atp-NAD kinase, domain 1"/>
    <property type="match status" value="1"/>
</dbReference>
<dbReference type="InterPro" id="IPR017438">
    <property type="entry name" value="ATP-NAD_kinase_N"/>
</dbReference>
<dbReference type="InterPro" id="IPR046349">
    <property type="entry name" value="C1-like_sf"/>
</dbReference>
<dbReference type="InterPro" id="IPR047471">
    <property type="entry name" value="C1_DGKbeta-like_rpt1"/>
</dbReference>
<dbReference type="InterPro" id="IPR029477">
    <property type="entry name" value="DAG_kinase_typeI_N"/>
</dbReference>
<dbReference type="InterPro" id="IPR037607">
    <property type="entry name" value="DGK"/>
</dbReference>
<dbReference type="InterPro" id="IPR038199">
    <property type="entry name" value="DGK_typeI_N_sf"/>
</dbReference>
<dbReference type="InterPro" id="IPR000756">
    <property type="entry name" value="Diacylglycerol_kin_accessory"/>
</dbReference>
<dbReference type="InterPro" id="IPR001206">
    <property type="entry name" value="Diacylglycerol_kinase_cat_dom"/>
</dbReference>
<dbReference type="InterPro" id="IPR011992">
    <property type="entry name" value="EF-hand-dom_pair"/>
</dbReference>
<dbReference type="InterPro" id="IPR018247">
    <property type="entry name" value="EF_Hand_1_Ca_BS"/>
</dbReference>
<dbReference type="InterPro" id="IPR002048">
    <property type="entry name" value="EF_hand_dom"/>
</dbReference>
<dbReference type="InterPro" id="IPR016064">
    <property type="entry name" value="NAD/diacylglycerol_kinase_sf"/>
</dbReference>
<dbReference type="InterPro" id="IPR002219">
    <property type="entry name" value="PE/DAG-bd"/>
</dbReference>
<dbReference type="PANTHER" id="PTHR11255">
    <property type="entry name" value="DIACYLGLYCEROL KINASE"/>
    <property type="match status" value="1"/>
</dbReference>
<dbReference type="PANTHER" id="PTHR11255:SF48">
    <property type="entry name" value="DIACYLGLYCEROL KINASE 1"/>
    <property type="match status" value="1"/>
</dbReference>
<dbReference type="Pfam" id="PF00130">
    <property type="entry name" value="C1_1"/>
    <property type="match status" value="2"/>
</dbReference>
<dbReference type="Pfam" id="PF14513">
    <property type="entry name" value="DAG_kinase_N"/>
    <property type="match status" value="1"/>
</dbReference>
<dbReference type="Pfam" id="PF00609">
    <property type="entry name" value="DAGK_acc"/>
    <property type="match status" value="1"/>
</dbReference>
<dbReference type="Pfam" id="PF00781">
    <property type="entry name" value="DAGK_cat"/>
    <property type="match status" value="1"/>
</dbReference>
<dbReference type="Pfam" id="PF13499">
    <property type="entry name" value="EF-hand_7"/>
    <property type="match status" value="1"/>
</dbReference>
<dbReference type="SMART" id="SM00109">
    <property type="entry name" value="C1"/>
    <property type="match status" value="2"/>
</dbReference>
<dbReference type="SMART" id="SM00045">
    <property type="entry name" value="DAGKa"/>
    <property type="match status" value="1"/>
</dbReference>
<dbReference type="SMART" id="SM00046">
    <property type="entry name" value="DAGKc"/>
    <property type="match status" value="1"/>
</dbReference>
<dbReference type="SMART" id="SM00054">
    <property type="entry name" value="EFh"/>
    <property type="match status" value="2"/>
</dbReference>
<dbReference type="SUPFAM" id="SSF57889">
    <property type="entry name" value="Cysteine-rich domain"/>
    <property type="match status" value="2"/>
</dbReference>
<dbReference type="SUPFAM" id="SSF47473">
    <property type="entry name" value="EF-hand"/>
    <property type="match status" value="2"/>
</dbReference>
<dbReference type="SUPFAM" id="SSF111331">
    <property type="entry name" value="NAD kinase/diacylglycerol kinase-like"/>
    <property type="match status" value="1"/>
</dbReference>
<dbReference type="PROSITE" id="PS50146">
    <property type="entry name" value="DAGK"/>
    <property type="match status" value="1"/>
</dbReference>
<dbReference type="PROSITE" id="PS00018">
    <property type="entry name" value="EF_HAND_1"/>
    <property type="match status" value="2"/>
</dbReference>
<dbReference type="PROSITE" id="PS50222">
    <property type="entry name" value="EF_HAND_2"/>
    <property type="match status" value="2"/>
</dbReference>
<dbReference type="PROSITE" id="PS00479">
    <property type="entry name" value="ZF_DAG_PE_1"/>
    <property type="match status" value="2"/>
</dbReference>
<dbReference type="PROSITE" id="PS50081">
    <property type="entry name" value="ZF_DAG_PE_2"/>
    <property type="match status" value="2"/>
</dbReference>
<name>DGK1_DROME</name>
<proteinExistence type="evidence at transcript level"/>
<feature type="chain" id="PRO_0000218473" description="Diacylglycerol kinase 1">
    <location>
        <begin position="1"/>
        <end position="1211"/>
    </location>
</feature>
<feature type="domain" description="EF-hand 1" evidence="3">
    <location>
        <begin position="286"/>
        <end position="321"/>
    </location>
</feature>
<feature type="domain" description="EF-hand 2" evidence="3">
    <location>
        <begin position="331"/>
        <end position="366"/>
    </location>
</feature>
<feature type="domain" description="DAGKc" evidence="4">
    <location>
        <begin position="548"/>
        <end position="682"/>
    </location>
</feature>
<feature type="zinc finger region" description="Phorbol-ester/DAG-type 1" evidence="2">
    <location>
        <begin position="382"/>
        <end position="432"/>
    </location>
</feature>
<feature type="zinc finger region" description="Phorbol-ester/DAG-type 2" evidence="2">
    <location>
        <begin position="449"/>
        <end position="498"/>
    </location>
</feature>
<feature type="region of interest" description="Disordered" evidence="5">
    <location>
        <begin position="174"/>
        <end position="244"/>
    </location>
</feature>
<feature type="region of interest" description="Disordered" evidence="5">
    <location>
        <begin position="789"/>
        <end position="841"/>
    </location>
</feature>
<feature type="region of interest" description="Disordered" evidence="5">
    <location>
        <begin position="874"/>
        <end position="893"/>
    </location>
</feature>
<feature type="region of interest" description="Disordered" evidence="5">
    <location>
        <begin position="910"/>
        <end position="958"/>
    </location>
</feature>
<feature type="compositionally biased region" description="Polar residues" evidence="5">
    <location>
        <begin position="197"/>
        <end position="230"/>
    </location>
</feature>
<feature type="compositionally biased region" description="Low complexity" evidence="5">
    <location>
        <begin position="231"/>
        <end position="244"/>
    </location>
</feature>
<feature type="compositionally biased region" description="Low complexity" evidence="5">
    <location>
        <begin position="795"/>
        <end position="805"/>
    </location>
</feature>
<feature type="compositionally biased region" description="Basic and acidic residues" evidence="5">
    <location>
        <begin position="826"/>
        <end position="841"/>
    </location>
</feature>
<feature type="compositionally biased region" description="Polar residues" evidence="5">
    <location>
        <begin position="879"/>
        <end position="893"/>
    </location>
</feature>
<feature type="compositionally biased region" description="Low complexity" evidence="5">
    <location>
        <begin position="931"/>
        <end position="958"/>
    </location>
</feature>
<feature type="binding site" evidence="3">
    <location>
        <position position="299"/>
    </location>
    <ligand>
        <name>Ca(2+)</name>
        <dbReference type="ChEBI" id="CHEBI:29108"/>
        <label>1</label>
    </ligand>
</feature>
<feature type="binding site" evidence="3">
    <location>
        <position position="301"/>
    </location>
    <ligand>
        <name>Ca(2+)</name>
        <dbReference type="ChEBI" id="CHEBI:29108"/>
        <label>1</label>
    </ligand>
</feature>
<feature type="binding site" evidence="3">
    <location>
        <position position="303"/>
    </location>
    <ligand>
        <name>Ca(2+)</name>
        <dbReference type="ChEBI" id="CHEBI:29108"/>
        <label>1</label>
    </ligand>
</feature>
<feature type="binding site" evidence="3">
    <location>
        <position position="310"/>
    </location>
    <ligand>
        <name>Ca(2+)</name>
        <dbReference type="ChEBI" id="CHEBI:29108"/>
        <label>1</label>
    </ligand>
</feature>
<feature type="binding site" evidence="3">
    <location>
        <position position="344"/>
    </location>
    <ligand>
        <name>Ca(2+)</name>
        <dbReference type="ChEBI" id="CHEBI:29108"/>
        <label>2</label>
    </ligand>
</feature>
<feature type="binding site" evidence="3">
    <location>
        <position position="346"/>
    </location>
    <ligand>
        <name>Ca(2+)</name>
        <dbReference type="ChEBI" id="CHEBI:29108"/>
        <label>2</label>
    </ligand>
</feature>
<feature type="binding site" evidence="3">
    <location>
        <position position="348"/>
    </location>
    <ligand>
        <name>Ca(2+)</name>
        <dbReference type="ChEBI" id="CHEBI:29108"/>
        <label>2</label>
    </ligand>
</feature>
<feature type="binding site" evidence="3">
    <location>
        <position position="350"/>
    </location>
    <ligand>
        <name>Ca(2+)</name>
        <dbReference type="ChEBI" id="CHEBI:29108"/>
        <label>2</label>
    </ligand>
</feature>
<feature type="binding site" evidence="3">
    <location>
        <position position="355"/>
    </location>
    <ligand>
        <name>Ca(2+)</name>
        <dbReference type="ChEBI" id="CHEBI:29108"/>
        <label>2</label>
    </ligand>
</feature>
<feature type="splice variant" id="VSP_017884" description="In isoform C." evidence="9">
    <location>
        <begin position="1"/>
        <end position="698"/>
    </location>
</feature>
<feature type="splice variant" id="VSP_017885" description="In isoform G." evidence="8 10">
    <original>NIGIAAPKWDKLSPREFLQLQELASYSTRKLQDVLREFSSPSAASTPKCIPDGDIDFDGFRRFLDAFLDCEA</original>
    <variation>RWELRYGWQIVTFRTNCATAAAVACHQLLCPVSLTSAVEIMPNSFPPEGRRRERRSGNLVLRAGCCCIGKYF</variation>
    <location>
        <begin position="2"/>
        <end position="73"/>
    </location>
</feature>
<feature type="splice variant" id="VSP_017886" description="In isoform G." evidence="8 10">
    <location>
        <begin position="74"/>
        <end position="485"/>
    </location>
</feature>
<feature type="splice variant" id="VSP_033247" description="In isoform F." evidence="11">
    <original>GSIPNINSIAELMPQCSGGGGGIGGTGGVAGAEGHAQARSSFVDKIHGITDKLHHSLGGHLSHDPSKTGSVHPMLTVTPSPLASGPSMFQASNPARRSVDSSPSHSATNHSQMSRNSSKKSSNSVNCKID</original>
    <variation>AVSRILPAIGRHCPGSLESGSAQAEKR</variation>
    <location>
        <begin position="121"/>
        <end position="250"/>
    </location>
</feature>
<feature type="splice variant" id="VSP_017887" description="In isoform G." evidence="8 10">
    <location>
        <begin position="530"/>
        <end position="537"/>
    </location>
</feature>
<feature type="sequence conflict" description="In Ref. 1; BAA01894." evidence="11" ref="1">
    <original>M</original>
    <variation>T</variation>
    <location>
        <position position="794"/>
    </location>
</feature>
<feature type="sequence conflict" description="In Ref. 2; CAA47750." evidence="11" ref="2">
    <original>Q</original>
    <variation>QQQQQ</variation>
    <location>
        <position position="863"/>
    </location>
</feature>